<gene>
    <name type="ORF">Tc00.1047053509683.80</name>
</gene>
<reference key="1">
    <citation type="journal article" date="2005" name="Science">
        <title>The genome sequence of Trypanosoma cruzi, etiologic agent of Chagas disease.</title>
        <authorList>
            <person name="El-Sayed N.M.A."/>
            <person name="Myler P.J."/>
            <person name="Bartholomeu D.C."/>
            <person name="Nilsson D."/>
            <person name="Aggarwal G."/>
            <person name="Tran A.-N."/>
            <person name="Ghedin E."/>
            <person name="Worthey E.A."/>
            <person name="Delcher A.L."/>
            <person name="Blandin G."/>
            <person name="Westenberger S.J."/>
            <person name="Caler E."/>
            <person name="Cerqueira G.C."/>
            <person name="Branche C."/>
            <person name="Haas B."/>
            <person name="Anupama A."/>
            <person name="Arner E."/>
            <person name="Aslund L."/>
            <person name="Attipoe P."/>
            <person name="Bontempi E."/>
            <person name="Bringaud F."/>
            <person name="Burton P."/>
            <person name="Cadag E."/>
            <person name="Campbell D.A."/>
            <person name="Carrington M."/>
            <person name="Crabtree J."/>
            <person name="Darban H."/>
            <person name="da Silveira J.F."/>
            <person name="de Jong P."/>
            <person name="Edwards K."/>
            <person name="Englund P.T."/>
            <person name="Fazelina G."/>
            <person name="Feldblyum T."/>
            <person name="Ferella M."/>
            <person name="Frasch A.C."/>
            <person name="Gull K."/>
            <person name="Horn D."/>
            <person name="Hou L."/>
            <person name="Huang Y."/>
            <person name="Kindlund E."/>
            <person name="Klingbeil M."/>
            <person name="Kluge S."/>
            <person name="Koo H."/>
            <person name="Lacerda D."/>
            <person name="Levin M.J."/>
            <person name="Lorenzi H."/>
            <person name="Louie T."/>
            <person name="Machado C.R."/>
            <person name="McCulloch R."/>
            <person name="McKenna A."/>
            <person name="Mizuno Y."/>
            <person name="Mottram J.C."/>
            <person name="Nelson S."/>
            <person name="Ochaya S."/>
            <person name="Osoegawa K."/>
            <person name="Pai G."/>
            <person name="Parsons M."/>
            <person name="Pentony M."/>
            <person name="Pettersson U."/>
            <person name="Pop M."/>
            <person name="Ramirez J.L."/>
            <person name="Rinta J."/>
            <person name="Robertson L."/>
            <person name="Salzberg S.L."/>
            <person name="Sanchez D.O."/>
            <person name="Seyler A."/>
            <person name="Sharma R."/>
            <person name="Shetty J."/>
            <person name="Simpson A.J."/>
            <person name="Sisk E."/>
            <person name="Tammi M.T."/>
            <person name="Tarleton R."/>
            <person name="Teixeira S."/>
            <person name="Van Aken S."/>
            <person name="Vogt C."/>
            <person name="Ward P.N."/>
            <person name="Wickstead B."/>
            <person name="Wortman J."/>
            <person name="White O."/>
            <person name="Fraser C.M."/>
            <person name="Stuart K.D."/>
            <person name="Andersson B."/>
        </authorList>
    </citation>
    <scope>NUCLEOTIDE SEQUENCE [LARGE SCALE GENOMIC DNA]</scope>
    <source>
        <strain>CL Brener</strain>
    </source>
</reference>
<proteinExistence type="inferred from homology"/>
<organism>
    <name type="scientific">Trypanosoma cruzi (strain CL Brener)</name>
    <dbReference type="NCBI Taxonomy" id="353153"/>
    <lineage>
        <taxon>Eukaryota</taxon>
        <taxon>Discoba</taxon>
        <taxon>Euglenozoa</taxon>
        <taxon>Kinetoplastea</taxon>
        <taxon>Metakinetoplastina</taxon>
        <taxon>Trypanosomatida</taxon>
        <taxon>Trypanosomatidae</taxon>
        <taxon>Trypanosoma</taxon>
        <taxon>Schizotrypanum</taxon>
    </lineage>
</organism>
<sequence length="616" mass="68320">MDKQAERGQSAGPVKTPQGTQPPAHNYTYHTNAAQRAVYDYLKNVKPIPELAEPKTYKTYEEASVEAVLYPIIEKHQVIMVAGAFFGDEGKGKTVNAVANHPGCTFIARVNSGENAGHTVYDDAGRKFVFNLAPSGLLSKGKRNYVGPECVMDPISFMENEVKQLIEANVPYKEQLFIGNVSIVTPYHKLLDLLASAPNSSTLKGMAPIHASKVTKRGIRLDHIFNDQSVLRSRLRKDIDTYFGFLKVKGLSDADVLRRCEKENGDGVVRVPPYVVEFVQAEDKVEYLVKLYMDRVRNNKNFPARCDVAHELRSALSRGEKVMLEGPQSYWLSNAREKFWESTTSADTTASGLLATAQYNFQLYSSVVINVHKAPGSSRVGVGANPSSFVAQDYFSATGVKTLRDLPENMCVDFDSIQKLFFTKAFHPETKEYNGIWEPLEFEDSTGKYNIGVAMAVASSRQHGECGAVTKKPRVCGFFDCVLQYEVNAVQGPYLSISALDRGDDYDKLGVTIAYVYYNGKNDEVLNINGREYKNGDIIKAGEAVPGEVALYYCHPIVKLINGWKQTPIAASKRKPGDPLPRGVCEFLSTVEYFTKAKIISIGNGPRGKDIIYIKQ</sequence>
<evidence type="ECO:0000250" key="1"/>
<evidence type="ECO:0000255" key="2">
    <source>
        <dbReference type="HAMAP-Rule" id="MF_03125"/>
    </source>
</evidence>
<evidence type="ECO:0000256" key="3">
    <source>
        <dbReference type="SAM" id="MobiDB-lite"/>
    </source>
</evidence>
<keyword id="KW-0963">Cytoplasm</keyword>
<keyword id="KW-0342">GTP-binding</keyword>
<keyword id="KW-0436">Ligase</keyword>
<keyword id="KW-0460">Magnesium</keyword>
<keyword id="KW-0479">Metal-binding</keyword>
<keyword id="KW-0547">Nucleotide-binding</keyword>
<keyword id="KW-0658">Purine biosynthesis</keyword>
<keyword id="KW-1185">Reference proteome</keyword>
<name>PURA1_TRYCC</name>
<dbReference type="EC" id="6.3.4.4" evidence="2"/>
<dbReference type="EMBL" id="AAHK01000345">
    <property type="protein sequence ID" value="EAN93489.1"/>
    <property type="molecule type" value="Genomic_DNA"/>
</dbReference>
<dbReference type="RefSeq" id="XP_815340.1">
    <property type="nucleotide sequence ID" value="XM_810247.1"/>
</dbReference>
<dbReference type="SMR" id="Q4DLT6"/>
<dbReference type="FunCoup" id="Q4DLT6">
    <property type="interactions" value="631"/>
</dbReference>
<dbReference type="STRING" id="353153.Q4DLT6"/>
<dbReference type="PaxDb" id="353153-Q4DLT6"/>
<dbReference type="EnsemblProtists" id="EAN93489">
    <property type="protein sequence ID" value="EAN93489"/>
    <property type="gene ID" value="Tc00.1047053509683.80"/>
</dbReference>
<dbReference type="GeneID" id="3547042"/>
<dbReference type="KEGG" id="tcr:509683.80"/>
<dbReference type="eggNOG" id="KOG1355">
    <property type="taxonomic scope" value="Eukaryota"/>
</dbReference>
<dbReference type="InParanoid" id="Q4DLT6"/>
<dbReference type="UniPathway" id="UPA00075">
    <property type="reaction ID" value="UER00335"/>
</dbReference>
<dbReference type="Proteomes" id="UP000002296">
    <property type="component" value="Unassembled WGS sequence"/>
</dbReference>
<dbReference type="GO" id="GO:0005737">
    <property type="term" value="C:cytoplasm"/>
    <property type="evidence" value="ECO:0007669"/>
    <property type="project" value="UniProtKB-SubCell"/>
</dbReference>
<dbReference type="GO" id="GO:0004019">
    <property type="term" value="F:adenylosuccinate synthase activity"/>
    <property type="evidence" value="ECO:0007669"/>
    <property type="project" value="UniProtKB-UniRule"/>
</dbReference>
<dbReference type="GO" id="GO:0005525">
    <property type="term" value="F:GTP binding"/>
    <property type="evidence" value="ECO:0007669"/>
    <property type="project" value="UniProtKB-UniRule"/>
</dbReference>
<dbReference type="GO" id="GO:0000287">
    <property type="term" value="F:magnesium ion binding"/>
    <property type="evidence" value="ECO:0007669"/>
    <property type="project" value="UniProtKB-UniRule"/>
</dbReference>
<dbReference type="GO" id="GO:0044208">
    <property type="term" value="P:'de novo' AMP biosynthetic process"/>
    <property type="evidence" value="ECO:0007669"/>
    <property type="project" value="UniProtKB-UniRule"/>
</dbReference>
<dbReference type="GO" id="GO:0046040">
    <property type="term" value="P:IMP metabolic process"/>
    <property type="evidence" value="ECO:0007669"/>
    <property type="project" value="TreeGrafter"/>
</dbReference>
<dbReference type="FunFam" id="3.90.170.10:FF:000003">
    <property type="entry name" value="Adenylosuccinate synthetase"/>
    <property type="match status" value="1"/>
</dbReference>
<dbReference type="Gene3D" id="3.40.440.10">
    <property type="entry name" value="Adenylosuccinate Synthetase, subunit A, domain 1"/>
    <property type="match status" value="1"/>
</dbReference>
<dbReference type="Gene3D" id="1.10.300.10">
    <property type="entry name" value="Adenylosuccinate Synthetase, subunit A, domain 2"/>
    <property type="match status" value="1"/>
</dbReference>
<dbReference type="Gene3D" id="3.90.170.10">
    <property type="entry name" value="Adenylosuccinate Synthetase, subunit A, domain 3"/>
    <property type="match status" value="1"/>
</dbReference>
<dbReference type="HAMAP" id="MF_00011">
    <property type="entry name" value="Adenylosucc_synth"/>
    <property type="match status" value="1"/>
</dbReference>
<dbReference type="InterPro" id="IPR018220">
    <property type="entry name" value="Adenylosuccin_syn_GTP-bd"/>
</dbReference>
<dbReference type="InterPro" id="IPR042109">
    <property type="entry name" value="Adenylosuccinate_synth_dom1"/>
</dbReference>
<dbReference type="InterPro" id="IPR042110">
    <property type="entry name" value="Adenylosuccinate_synth_dom2"/>
</dbReference>
<dbReference type="InterPro" id="IPR042111">
    <property type="entry name" value="Adenylosuccinate_synth_dom3"/>
</dbReference>
<dbReference type="InterPro" id="IPR001114">
    <property type="entry name" value="Adenylosuccinate_synthetase"/>
</dbReference>
<dbReference type="InterPro" id="IPR027417">
    <property type="entry name" value="P-loop_NTPase"/>
</dbReference>
<dbReference type="PANTHER" id="PTHR11846">
    <property type="entry name" value="ADENYLOSUCCINATE SYNTHETASE"/>
    <property type="match status" value="1"/>
</dbReference>
<dbReference type="PANTHER" id="PTHR11846:SF0">
    <property type="entry name" value="ADENYLOSUCCINATE SYNTHETASE"/>
    <property type="match status" value="1"/>
</dbReference>
<dbReference type="Pfam" id="PF00709">
    <property type="entry name" value="Adenylsucc_synt"/>
    <property type="match status" value="1"/>
</dbReference>
<dbReference type="SMART" id="SM00788">
    <property type="entry name" value="Adenylsucc_synt"/>
    <property type="match status" value="1"/>
</dbReference>
<dbReference type="SUPFAM" id="SSF52540">
    <property type="entry name" value="P-loop containing nucleoside triphosphate hydrolases"/>
    <property type="match status" value="1"/>
</dbReference>
<dbReference type="PROSITE" id="PS01266">
    <property type="entry name" value="ADENYLOSUCCIN_SYN_1"/>
    <property type="match status" value="1"/>
</dbReference>
<comment type="function">
    <text evidence="1">Plays an important role in the salvage pathway for purine nucleotide biosynthesis. Catalyzes the first committed step in the biosynthesis of AMP from IMP (By similarity).</text>
</comment>
<comment type="catalytic activity">
    <reaction evidence="2">
        <text>IMP + L-aspartate + GTP = N(6)-(1,2-dicarboxyethyl)-AMP + GDP + phosphate + 2 H(+)</text>
        <dbReference type="Rhea" id="RHEA:15753"/>
        <dbReference type="ChEBI" id="CHEBI:15378"/>
        <dbReference type="ChEBI" id="CHEBI:29991"/>
        <dbReference type="ChEBI" id="CHEBI:37565"/>
        <dbReference type="ChEBI" id="CHEBI:43474"/>
        <dbReference type="ChEBI" id="CHEBI:57567"/>
        <dbReference type="ChEBI" id="CHEBI:58053"/>
        <dbReference type="ChEBI" id="CHEBI:58189"/>
        <dbReference type="EC" id="6.3.4.4"/>
    </reaction>
</comment>
<comment type="cofactor">
    <cofactor evidence="2">
        <name>Mg(2+)</name>
        <dbReference type="ChEBI" id="CHEBI:18420"/>
    </cofactor>
    <text evidence="2">Binds 1 Mg(2+) ion per subunit.</text>
</comment>
<comment type="pathway">
    <text evidence="2">Purine metabolism; AMP biosynthesis via de novo pathway; AMP from IMP: step 1/2.</text>
</comment>
<comment type="subunit">
    <text evidence="2">Homodimer.</text>
</comment>
<comment type="subcellular location">
    <subcellularLocation>
        <location evidence="2">Cytoplasm</location>
    </subcellularLocation>
</comment>
<comment type="miscellaneous">
    <text>Parasitic protozoa lack the de novo purine biosynthesis pathway and rely exclusively on the salvage pathway for their purine nucleotide requirements.</text>
</comment>
<comment type="similarity">
    <text evidence="2">Belongs to the adenylosuccinate synthetase family.</text>
</comment>
<feature type="chain" id="PRO_0000399307" description="Adenylosuccinate synthetase 1">
    <location>
        <begin position="1"/>
        <end position="616"/>
    </location>
</feature>
<feature type="region of interest" description="Disordered" evidence="3">
    <location>
        <begin position="1"/>
        <end position="27"/>
    </location>
</feature>
<feature type="compositionally biased region" description="Polar residues" evidence="3">
    <location>
        <begin position="17"/>
        <end position="27"/>
    </location>
</feature>
<feature type="active site" description="Proton acceptor" evidence="2">
    <location>
        <position position="88"/>
    </location>
</feature>
<feature type="active site" description="Proton donor" evidence="2">
    <location>
        <position position="118"/>
    </location>
</feature>
<feature type="binding site" evidence="2">
    <location>
        <begin position="87"/>
        <end position="93"/>
    </location>
    <ligand>
        <name>GTP</name>
        <dbReference type="ChEBI" id="CHEBI:37565"/>
    </ligand>
</feature>
<feature type="binding site" description="in other chain" evidence="2">
    <location>
        <begin position="88"/>
        <end position="91"/>
    </location>
    <ligand>
        <name>IMP</name>
        <dbReference type="ChEBI" id="CHEBI:58053"/>
        <note>ligand shared between dimeric partners</note>
    </ligand>
</feature>
<feature type="binding site" evidence="2">
    <location>
        <position position="88"/>
    </location>
    <ligand>
        <name>Mg(2+)</name>
        <dbReference type="ChEBI" id="CHEBI:18420"/>
    </ligand>
</feature>
<feature type="binding site" description="in other chain" evidence="2">
    <location>
        <begin position="115"/>
        <end position="118"/>
    </location>
    <ligand>
        <name>IMP</name>
        <dbReference type="ChEBI" id="CHEBI:58053"/>
        <note>ligand shared between dimeric partners</note>
    </ligand>
</feature>
<feature type="binding site" evidence="2">
    <location>
        <begin position="117"/>
        <end position="119"/>
    </location>
    <ligand>
        <name>GTP</name>
        <dbReference type="ChEBI" id="CHEBI:37565"/>
    </ligand>
</feature>
<feature type="binding site" evidence="2">
    <location>
        <position position="117"/>
    </location>
    <ligand>
        <name>Mg(2+)</name>
        <dbReference type="ChEBI" id="CHEBI:18420"/>
    </ligand>
</feature>
<feature type="binding site" description="in other chain" evidence="2">
    <location>
        <position position="202"/>
    </location>
    <ligand>
        <name>IMP</name>
        <dbReference type="ChEBI" id="CHEBI:58053"/>
        <note>ligand shared between dimeric partners</note>
    </ligand>
</feature>
<feature type="binding site" evidence="2">
    <location>
        <position position="216"/>
    </location>
    <ligand>
        <name>IMP</name>
        <dbReference type="ChEBI" id="CHEBI:58053"/>
        <note>ligand shared between dimeric partners</note>
    </ligand>
</feature>
<feature type="binding site" description="in other chain" evidence="2">
    <location>
        <position position="328"/>
    </location>
    <ligand>
        <name>IMP</name>
        <dbReference type="ChEBI" id="CHEBI:58053"/>
        <note>ligand shared between dimeric partners</note>
    </ligand>
</feature>
<feature type="binding site" description="in other chain" evidence="2">
    <location>
        <position position="343"/>
    </location>
    <ligand>
        <name>IMP</name>
        <dbReference type="ChEBI" id="CHEBI:58053"/>
        <note>ligand shared between dimeric partners</note>
    </ligand>
</feature>
<feature type="binding site" evidence="2">
    <location>
        <begin position="468"/>
        <end position="474"/>
    </location>
    <ligand>
        <name>substrate</name>
    </ligand>
</feature>
<feature type="binding site" description="in other chain" evidence="2">
    <location>
        <position position="472"/>
    </location>
    <ligand>
        <name>IMP</name>
        <dbReference type="ChEBI" id="CHEBI:58053"/>
        <note>ligand shared between dimeric partners</note>
    </ligand>
</feature>
<feature type="binding site" evidence="2">
    <location>
        <position position="474"/>
    </location>
    <ligand>
        <name>GTP</name>
        <dbReference type="ChEBI" id="CHEBI:37565"/>
    </ligand>
</feature>
<feature type="binding site" evidence="2">
    <location>
        <begin position="603"/>
        <end position="605"/>
    </location>
    <ligand>
        <name>GTP</name>
        <dbReference type="ChEBI" id="CHEBI:37565"/>
    </ligand>
</feature>
<accession>Q4DLT6</accession>
<protein>
    <recommendedName>
        <fullName evidence="2">Adenylosuccinate synthetase 1</fullName>
        <shortName evidence="2">AMPSase 1</shortName>
        <shortName evidence="2">AdSS 1</shortName>
        <ecNumber evidence="2">6.3.4.4</ecNumber>
    </recommendedName>
    <alternativeName>
        <fullName evidence="2">IMP--aspartate ligase 1</fullName>
    </alternativeName>
</protein>